<proteinExistence type="evidence at protein level"/>
<feature type="chain" id="PRO_0000260449" description="Pyrrolysine--tRNA ligase">
    <location>
        <begin position="1"/>
        <end position="419"/>
    </location>
</feature>
<feature type="region of interest" description="Disordered" evidence="1">
    <location>
        <begin position="100"/>
        <end position="157"/>
    </location>
</feature>
<feature type="compositionally biased region" description="Polar residues" evidence="1">
    <location>
        <begin position="120"/>
        <end position="141"/>
    </location>
</feature>
<feature type="compositionally biased region" description="Low complexity" evidence="1">
    <location>
        <begin position="142"/>
        <end position="154"/>
    </location>
</feature>
<feature type="sequence conflict" description="In Ref. 1; AAL40867." evidence="3" ref="1">
    <original>W</original>
    <variation>G</variation>
    <location>
        <position position="16"/>
    </location>
</feature>
<feature type="sequence conflict" description="In Ref. 1; AAL40867." evidence="3" ref="1">
    <original>I</original>
    <variation>V</variation>
    <location>
        <position position="287"/>
    </location>
</feature>
<comment type="function">
    <text evidence="2">Catalyzes the attachment of pyrrolysine to tRNA(Pyl). Pyrrolysine is a lysine derivative encoded by the termination codon UAG.</text>
</comment>
<comment type="catalytic activity">
    <reaction>
        <text>tRNA(Pyl) + L-pyrrolysine + ATP = L-pyrrolysyl-tRNA(Pyl) + AMP + diphosphate</text>
        <dbReference type="Rhea" id="RHEA:19277"/>
        <dbReference type="Rhea" id="RHEA-COMP:9720"/>
        <dbReference type="Rhea" id="RHEA-COMP:9721"/>
        <dbReference type="ChEBI" id="CHEBI:30616"/>
        <dbReference type="ChEBI" id="CHEBI:33019"/>
        <dbReference type="ChEBI" id="CHEBI:58499"/>
        <dbReference type="ChEBI" id="CHEBI:78442"/>
        <dbReference type="ChEBI" id="CHEBI:78556"/>
        <dbReference type="ChEBI" id="CHEBI:456215"/>
        <dbReference type="EC" id="6.1.1.26"/>
    </reaction>
</comment>
<comment type="biophysicochemical properties">
    <kinetics>
        <KM evidence="2">53 uM for pyrrolysine</KM>
        <KM evidence="2">2 uM for ATP</KM>
        <Vmax evidence="2">120.0 nmol/min/mg enzyme</Vmax>
    </kinetics>
</comment>
<comment type="subcellular location">
    <subcellularLocation>
        <location>Cytoplasm</location>
    </subcellularLocation>
</comment>
<comment type="similarity">
    <text evidence="3">Belongs to the class-II aminoacyl-tRNA synthetase family.</text>
</comment>
<evidence type="ECO:0000256" key="1">
    <source>
        <dbReference type="SAM" id="MobiDB-lite"/>
    </source>
</evidence>
<evidence type="ECO:0000269" key="2">
    <source>
    </source>
</evidence>
<evidence type="ECO:0000305" key="3"/>
<sequence length="419" mass="47570">MDKKPLDVLISATGLWMSRTGTLHKIKHHEVSRSKIYIEMACGDHLVVNNSRSCRTARAFRHHKYRKTCKRCRVSDEDINNFLTRSTESKNSVKVRVVSAPKVKKAMPKSVSRAPKPLENSVSAKASTNTSRSVPSPAKSTPNSSVPASAPAPSLTRSQLDRVEALLSPEDKISLNMAKPFRELEPELVTRRKNDFQRLYTNDREDYLGKLERDITKFFVDRGFLEIKSPILIPAEYVERMGINNDTELSKQIFRVDKNLCLRPMLAPTLYNYLRKLDRILPGPIKIFEVGPCYRKESDGKEHLEEFTMVNFCQMGSGCTRENLEALIKEFLDYLEIDFEIVGDSCMVYGDTLDIMHGDLELSSAVVGPVSLDREWGIDKPWIGAGFGLERLLKVMHGFKNIKRASRSESYYNGISTNL</sequence>
<reference key="1">
    <citation type="journal article" date="2002" name="Science">
        <title>Pyrrolysine encoded by UAG in Archaea: charging of a UAG-decoding specialized tRNA.</title>
        <authorList>
            <person name="Srinivasan G."/>
            <person name="James C.M."/>
            <person name="Krzycki J.A."/>
        </authorList>
    </citation>
    <scope>NUCLEOTIDE SEQUENCE [GENOMIC DNA]</scope>
    <source>
        <strain>ATCC 43569 / MS / DSM 800 / JCM 10043 / NBRC 100474</strain>
    </source>
</reference>
<reference key="2">
    <citation type="journal article" date="2003" name="Mol. Cell">
        <title>Activation of the pyrrolysine suppressor tRNA requires formation of a ternary complex with class I and class II lysyl-tRNA synthetases.</title>
        <authorList>
            <person name="Polycarpo C."/>
            <person name="Ambrogelly A."/>
            <person name="Ruan B."/>
            <person name="Tumbula-Hansen D."/>
            <person name="Ataide S.F."/>
            <person name="Ishitani R."/>
            <person name="Yokoyama S."/>
            <person name="Nureki O."/>
            <person name="Ibba M."/>
            <person name="Soell D."/>
        </authorList>
    </citation>
    <scope>NUCLEOTIDE SEQUENCE [GENOMIC DNA]</scope>
    <source>
        <strain>ATCC 43569 / MS / DSM 800 / JCM 10043 / NBRC 100474</strain>
    </source>
</reference>
<reference key="3">
    <citation type="journal article" date="2004" name="Nature">
        <title>Direct charging of tRNA(CUA) with pyrrolysine in vitro and in vivo.</title>
        <authorList>
            <person name="Blight S.K."/>
            <person name="Larue R.C."/>
            <person name="Mahapatra A."/>
            <person name="Longstaff D.G."/>
            <person name="Chang E."/>
            <person name="Zhao G."/>
            <person name="Kang P.T."/>
            <person name="Green-Church K.B."/>
            <person name="Chan M.K."/>
            <person name="Krzycki J.A."/>
        </authorList>
    </citation>
    <scope>FUNCTION</scope>
    <scope>KINETIC PARAMETERS</scope>
    <source>
        <strain>ATCC 43569 / MS / DSM 800 / JCM 10043 / NBRC 100474</strain>
    </source>
</reference>
<organism>
    <name type="scientific">Methanosarcina barkeri</name>
    <dbReference type="NCBI Taxonomy" id="2208"/>
    <lineage>
        <taxon>Archaea</taxon>
        <taxon>Methanobacteriati</taxon>
        <taxon>Methanobacteriota</taxon>
        <taxon>Stenosarchaea group</taxon>
        <taxon>Methanomicrobia</taxon>
        <taxon>Methanosarcinales</taxon>
        <taxon>Methanosarcinaceae</taxon>
        <taxon>Methanosarcina</taxon>
    </lineage>
</organism>
<dbReference type="EC" id="6.1.1.26"/>
<dbReference type="EMBL" id="AY064401">
    <property type="protein sequence ID" value="AAL40867.1"/>
    <property type="molecule type" value="Genomic_DNA"/>
</dbReference>
<dbReference type="EMBL" id="AY273828">
    <property type="protein sequence ID" value="AAQ19545.1"/>
    <property type="molecule type" value="Genomic_DNA"/>
</dbReference>
<dbReference type="SMR" id="Q6WRH6"/>
<dbReference type="BioCyc" id="MetaCyc:MONOMER-15529"/>
<dbReference type="BRENDA" id="6.1.1.26">
    <property type="organism ID" value="3250"/>
</dbReference>
<dbReference type="SABIO-RK" id="Q6WRH6"/>
<dbReference type="GO" id="GO:0005737">
    <property type="term" value="C:cytoplasm"/>
    <property type="evidence" value="ECO:0007669"/>
    <property type="project" value="UniProtKB-SubCell"/>
</dbReference>
<dbReference type="GO" id="GO:0005524">
    <property type="term" value="F:ATP binding"/>
    <property type="evidence" value="ECO:0007669"/>
    <property type="project" value="UniProtKB-UniRule"/>
</dbReference>
<dbReference type="GO" id="GO:0043767">
    <property type="term" value="F:pyrrolysyl-tRNA synthetase activity"/>
    <property type="evidence" value="ECO:0007669"/>
    <property type="project" value="UniProtKB-EC"/>
</dbReference>
<dbReference type="GO" id="GO:0000049">
    <property type="term" value="F:tRNA binding"/>
    <property type="evidence" value="ECO:0007669"/>
    <property type="project" value="InterPro"/>
</dbReference>
<dbReference type="GO" id="GO:0006418">
    <property type="term" value="P:tRNA aminoacylation for protein translation"/>
    <property type="evidence" value="ECO:0007669"/>
    <property type="project" value="UniProtKB-UniRule"/>
</dbReference>
<dbReference type="Gene3D" id="3.30.930.10">
    <property type="entry name" value="Bira Bifunctional Protein, Domain 2"/>
    <property type="match status" value="1"/>
</dbReference>
<dbReference type="Gene3D" id="1.10.287.540">
    <property type="entry name" value="Helix hairpin bin"/>
    <property type="match status" value="1"/>
</dbReference>
<dbReference type="HAMAP" id="MF_01573">
    <property type="entry name" value="Pyl_tRNA_synth"/>
    <property type="match status" value="1"/>
</dbReference>
<dbReference type="InterPro" id="IPR006195">
    <property type="entry name" value="aa-tRNA-synth_II"/>
</dbReference>
<dbReference type="InterPro" id="IPR045864">
    <property type="entry name" value="aa-tRNA-synth_II/BPL/LPL"/>
</dbReference>
<dbReference type="InterPro" id="IPR002319">
    <property type="entry name" value="Phenylalanyl-tRNA_Synthase"/>
</dbReference>
<dbReference type="InterPro" id="IPR012739">
    <property type="entry name" value="Pyrrolysyl-tRNA_ligase"/>
</dbReference>
<dbReference type="InterPro" id="IPR023877">
    <property type="entry name" value="Pyrrolysyl-tRNA_ligase_C"/>
</dbReference>
<dbReference type="InterPro" id="IPR023878">
    <property type="entry name" value="Pyrrolysyl-tRNA_ligase_N"/>
</dbReference>
<dbReference type="NCBIfam" id="NF007083">
    <property type="entry name" value="PRK09537.1"/>
    <property type="match status" value="1"/>
</dbReference>
<dbReference type="NCBIfam" id="TIGR02367">
    <property type="entry name" value="PylS_Cterm"/>
    <property type="match status" value="1"/>
</dbReference>
<dbReference type="NCBIfam" id="TIGR03912">
    <property type="entry name" value="PylS_Nterm"/>
    <property type="match status" value="1"/>
</dbReference>
<dbReference type="Pfam" id="PF01409">
    <property type="entry name" value="tRNA-synt_2d"/>
    <property type="match status" value="1"/>
</dbReference>
<dbReference type="SUPFAM" id="SSF55681">
    <property type="entry name" value="Class II aaRS and biotin synthetases"/>
    <property type="match status" value="1"/>
</dbReference>
<dbReference type="PROSITE" id="PS50862">
    <property type="entry name" value="AA_TRNA_LIGASE_II"/>
    <property type="match status" value="1"/>
</dbReference>
<accession>Q6WRH6</accession>
<accession>Q8NKQ6</accession>
<gene>
    <name type="primary">pylS</name>
</gene>
<name>PYLS_METBA</name>
<protein>
    <recommendedName>
        <fullName>Pyrrolysine--tRNA ligase</fullName>
        <ecNumber>6.1.1.26</ecNumber>
    </recommendedName>
    <alternativeName>
        <fullName>Pyrrolysine--tRNA(Pyl) ligase</fullName>
    </alternativeName>
    <alternativeName>
        <fullName>Pyrrolysyl-tRNA synthetase</fullName>
        <shortName>PylRS</shortName>
    </alternativeName>
</protein>
<keyword id="KW-0030">Aminoacyl-tRNA synthetase</keyword>
<keyword id="KW-0067">ATP-binding</keyword>
<keyword id="KW-0963">Cytoplasm</keyword>
<keyword id="KW-0436">Ligase</keyword>
<keyword id="KW-0547">Nucleotide-binding</keyword>
<keyword id="KW-0648">Protein biosynthesis</keyword>